<gene>
    <name evidence="1" type="primary">argH</name>
    <name type="ordered locus">RB10834</name>
</gene>
<reference key="1">
    <citation type="journal article" date="2003" name="Proc. Natl. Acad. Sci. U.S.A.">
        <title>Complete genome sequence of the marine planctomycete Pirellula sp. strain 1.</title>
        <authorList>
            <person name="Gloeckner F.O."/>
            <person name="Kube M."/>
            <person name="Bauer M."/>
            <person name="Teeling H."/>
            <person name="Lombardot T."/>
            <person name="Ludwig W."/>
            <person name="Gade D."/>
            <person name="Beck A."/>
            <person name="Borzym K."/>
            <person name="Heitmann K."/>
            <person name="Rabus R."/>
            <person name="Schlesner H."/>
            <person name="Amann R."/>
            <person name="Reinhardt R."/>
        </authorList>
    </citation>
    <scope>NUCLEOTIDE SEQUENCE [LARGE SCALE GENOMIC DNA]</scope>
    <source>
        <strain>DSM 10527 / NCIMB 13988 / SH1</strain>
    </source>
</reference>
<keyword id="KW-0028">Amino-acid biosynthesis</keyword>
<keyword id="KW-0055">Arginine biosynthesis</keyword>
<keyword id="KW-0963">Cytoplasm</keyword>
<keyword id="KW-0456">Lyase</keyword>
<keyword id="KW-1185">Reference proteome</keyword>
<organism>
    <name type="scientific">Rhodopirellula baltica (strain DSM 10527 / NCIMB 13988 / SH1)</name>
    <dbReference type="NCBI Taxonomy" id="243090"/>
    <lineage>
        <taxon>Bacteria</taxon>
        <taxon>Pseudomonadati</taxon>
        <taxon>Planctomycetota</taxon>
        <taxon>Planctomycetia</taxon>
        <taxon>Pirellulales</taxon>
        <taxon>Pirellulaceae</taxon>
        <taxon>Rhodopirellula</taxon>
    </lineage>
</organism>
<proteinExistence type="inferred from homology"/>
<comment type="catalytic activity">
    <reaction evidence="1">
        <text>2-(N(omega)-L-arginino)succinate = fumarate + L-arginine</text>
        <dbReference type="Rhea" id="RHEA:24020"/>
        <dbReference type="ChEBI" id="CHEBI:29806"/>
        <dbReference type="ChEBI" id="CHEBI:32682"/>
        <dbReference type="ChEBI" id="CHEBI:57472"/>
        <dbReference type="EC" id="4.3.2.1"/>
    </reaction>
</comment>
<comment type="pathway">
    <text evidence="1">Amino-acid biosynthesis; L-arginine biosynthesis; L-arginine from L-ornithine and carbamoyl phosphate: step 3/3.</text>
</comment>
<comment type="subcellular location">
    <subcellularLocation>
        <location evidence="1">Cytoplasm</location>
    </subcellularLocation>
</comment>
<comment type="similarity">
    <text evidence="1">Belongs to the lyase 1 family. Argininosuccinate lyase subfamily.</text>
</comment>
<comment type="sequence caution" evidence="2">
    <conflict type="erroneous initiation">
        <sequence resource="EMBL-CDS" id="CAD77017"/>
    </conflict>
</comment>
<name>ARLY_RHOBA</name>
<sequence length="460" mass="51855">MASPSRSGVFQAETDARLEAYAESISFDSRLYEHDIRGSIAHANMLREVGLLTEDEFKLIRDTLETIRGELDRGELPMRFELEDIHMHVEQALIDRIGDTGRKLHTARSRNDQVSTDTRMWIRQSLDEIDALLVDLQSAFLSRCENDFDIILPAYTHLQRAQPVLAPHYWLAYIEKLERDRQRIADCRKRVNQCSLGIAAVAGTTLPIDRQHTASALDFEGITANSLDTSSDRDFVVESTFVMSLIASHLSGWAEEWILWSTVEFDFIQIPQAFCTGSSIMPQKVNPDTLELTRGKSARVMGALQTLMLLIKNLPLAYNRDLQEDKPPLFDAFDTTRAMLELAAPIVRGAELKRESIAARIEKGYLDATTLMEWMIARGMPQRTAHHLVGAIVSEAMQQGVTLSDLPLETYQKLSDQIDESVYEVLGTSNAIAAFRSEGSTAPARVREQIKQWTSRLENA</sequence>
<accession>Q7UK64</accession>
<evidence type="ECO:0000255" key="1">
    <source>
        <dbReference type="HAMAP-Rule" id="MF_00006"/>
    </source>
</evidence>
<evidence type="ECO:0000305" key="2"/>
<protein>
    <recommendedName>
        <fullName evidence="1">Argininosuccinate lyase</fullName>
        <shortName evidence="1">ASAL</shortName>
        <ecNumber evidence="1">4.3.2.1</ecNumber>
    </recommendedName>
    <alternativeName>
        <fullName evidence="1">Arginosuccinase</fullName>
    </alternativeName>
</protein>
<feature type="chain" id="PRO_0000137814" description="Argininosuccinate lyase">
    <location>
        <begin position="1"/>
        <end position="460"/>
    </location>
</feature>
<dbReference type="EC" id="4.3.2.1" evidence="1"/>
<dbReference type="EMBL" id="BX294152">
    <property type="protein sequence ID" value="CAD77017.1"/>
    <property type="status" value="ALT_INIT"/>
    <property type="molecule type" value="Genomic_DNA"/>
</dbReference>
<dbReference type="RefSeq" id="NP_869639.1">
    <property type="nucleotide sequence ID" value="NC_005027.1"/>
</dbReference>
<dbReference type="RefSeq" id="WP_037227775.1">
    <property type="nucleotide sequence ID" value="NC_005027.1"/>
</dbReference>
<dbReference type="SMR" id="Q7UK64"/>
<dbReference type="FunCoup" id="Q7UK64">
    <property type="interactions" value="481"/>
</dbReference>
<dbReference type="STRING" id="243090.RB10834"/>
<dbReference type="EnsemblBacteria" id="CAD77017">
    <property type="protein sequence ID" value="CAD77017"/>
    <property type="gene ID" value="RB10834"/>
</dbReference>
<dbReference type="KEGG" id="rba:RB10834"/>
<dbReference type="PATRIC" id="fig|243090.15.peg.5228"/>
<dbReference type="eggNOG" id="COG0165">
    <property type="taxonomic scope" value="Bacteria"/>
</dbReference>
<dbReference type="HOGENOM" id="CLU_027272_2_3_0"/>
<dbReference type="InParanoid" id="Q7UK64"/>
<dbReference type="OrthoDB" id="9769623at2"/>
<dbReference type="UniPathway" id="UPA00068">
    <property type="reaction ID" value="UER00114"/>
</dbReference>
<dbReference type="Proteomes" id="UP000001025">
    <property type="component" value="Chromosome"/>
</dbReference>
<dbReference type="GO" id="GO:0005829">
    <property type="term" value="C:cytosol"/>
    <property type="evidence" value="ECO:0000318"/>
    <property type="project" value="GO_Central"/>
</dbReference>
<dbReference type="GO" id="GO:0004056">
    <property type="term" value="F:argininosuccinate lyase activity"/>
    <property type="evidence" value="ECO:0000318"/>
    <property type="project" value="GO_Central"/>
</dbReference>
<dbReference type="GO" id="GO:0042450">
    <property type="term" value="P:arginine biosynthetic process via ornithine"/>
    <property type="evidence" value="ECO:0000318"/>
    <property type="project" value="GO_Central"/>
</dbReference>
<dbReference type="GO" id="GO:0006526">
    <property type="term" value="P:L-arginine biosynthetic process"/>
    <property type="evidence" value="ECO:0007669"/>
    <property type="project" value="UniProtKB-UniRule"/>
</dbReference>
<dbReference type="CDD" id="cd01359">
    <property type="entry name" value="Argininosuccinate_lyase"/>
    <property type="match status" value="1"/>
</dbReference>
<dbReference type="FunFam" id="1.10.275.10:FF:000002">
    <property type="entry name" value="Argininosuccinate lyase"/>
    <property type="match status" value="1"/>
</dbReference>
<dbReference type="FunFam" id="1.10.40.30:FF:000001">
    <property type="entry name" value="Argininosuccinate lyase"/>
    <property type="match status" value="1"/>
</dbReference>
<dbReference type="FunFam" id="1.20.200.10:FF:000015">
    <property type="entry name" value="argininosuccinate lyase isoform X2"/>
    <property type="match status" value="1"/>
</dbReference>
<dbReference type="Gene3D" id="1.10.40.30">
    <property type="entry name" value="Fumarase/aspartase (C-terminal domain)"/>
    <property type="match status" value="1"/>
</dbReference>
<dbReference type="Gene3D" id="1.20.200.10">
    <property type="entry name" value="Fumarase/aspartase (Central domain)"/>
    <property type="match status" value="1"/>
</dbReference>
<dbReference type="Gene3D" id="1.10.275.10">
    <property type="entry name" value="Fumarase/aspartase (N-terminal domain)"/>
    <property type="match status" value="1"/>
</dbReference>
<dbReference type="HAMAP" id="MF_00006">
    <property type="entry name" value="Arg_succ_lyase"/>
    <property type="match status" value="1"/>
</dbReference>
<dbReference type="InterPro" id="IPR029419">
    <property type="entry name" value="Arg_succ_lyase_C"/>
</dbReference>
<dbReference type="InterPro" id="IPR009049">
    <property type="entry name" value="Argininosuccinate_lyase"/>
</dbReference>
<dbReference type="InterPro" id="IPR024083">
    <property type="entry name" value="Fumarase/histidase_N"/>
</dbReference>
<dbReference type="InterPro" id="IPR020557">
    <property type="entry name" value="Fumarate_lyase_CS"/>
</dbReference>
<dbReference type="InterPro" id="IPR000362">
    <property type="entry name" value="Fumarate_lyase_fam"/>
</dbReference>
<dbReference type="InterPro" id="IPR022761">
    <property type="entry name" value="Fumarate_lyase_N"/>
</dbReference>
<dbReference type="InterPro" id="IPR008948">
    <property type="entry name" value="L-Aspartase-like"/>
</dbReference>
<dbReference type="NCBIfam" id="TIGR00838">
    <property type="entry name" value="argH"/>
    <property type="match status" value="1"/>
</dbReference>
<dbReference type="PANTHER" id="PTHR43814">
    <property type="entry name" value="ARGININOSUCCINATE LYASE"/>
    <property type="match status" value="1"/>
</dbReference>
<dbReference type="PANTHER" id="PTHR43814:SF1">
    <property type="entry name" value="ARGININOSUCCINATE LYASE"/>
    <property type="match status" value="1"/>
</dbReference>
<dbReference type="Pfam" id="PF14698">
    <property type="entry name" value="ASL_C2"/>
    <property type="match status" value="1"/>
</dbReference>
<dbReference type="Pfam" id="PF00206">
    <property type="entry name" value="Lyase_1"/>
    <property type="match status" value="1"/>
</dbReference>
<dbReference type="PRINTS" id="PR00145">
    <property type="entry name" value="ARGSUCLYASE"/>
</dbReference>
<dbReference type="PRINTS" id="PR00149">
    <property type="entry name" value="FUMRATELYASE"/>
</dbReference>
<dbReference type="SUPFAM" id="SSF48557">
    <property type="entry name" value="L-aspartase-like"/>
    <property type="match status" value="1"/>
</dbReference>
<dbReference type="PROSITE" id="PS00163">
    <property type="entry name" value="FUMARATE_LYASES"/>
    <property type="match status" value="1"/>
</dbReference>